<comment type="function">
    <text evidence="1">One of several proteins that assist in the late maturation steps of the functional core of the 30S ribosomal subunit. Associates with free 30S ribosomal subunits (but not with 30S subunits that are part of 70S ribosomes or polysomes). Required for efficient processing of 16S rRNA. May interact with the 5'-terminal helix region of 16S rRNA.</text>
</comment>
<comment type="subunit">
    <text evidence="1">Monomer. Binds 30S ribosomal subunits, but not 50S ribosomal subunits or 70S ribosomes.</text>
</comment>
<comment type="subcellular location">
    <subcellularLocation>
        <location evidence="1">Cytoplasm</location>
    </subcellularLocation>
</comment>
<comment type="similarity">
    <text evidence="1">Belongs to the RbfA family.</text>
</comment>
<accession>A1WLI2</accession>
<sequence>MAGKKPSHRAFKVADQIQRDLTQLLARLKDPRLGLVTLQGVEISPDYAHAKVFFSLLTGTPEQTQAALDQAAGFLRNGLFKRLQIHTVPTLHFVFDRSCERAADMNALIAKAVSTRAKED</sequence>
<proteinExistence type="inferred from homology"/>
<feature type="chain" id="PRO_1000000244" description="Ribosome-binding factor A">
    <location>
        <begin position="1"/>
        <end position="120"/>
    </location>
</feature>
<gene>
    <name evidence="1" type="primary">rbfA</name>
    <name type="ordered locus">Veis_2748</name>
</gene>
<dbReference type="EMBL" id="CP000542">
    <property type="protein sequence ID" value="ABM58489.1"/>
    <property type="molecule type" value="Genomic_DNA"/>
</dbReference>
<dbReference type="RefSeq" id="WP_011810487.1">
    <property type="nucleotide sequence ID" value="NC_008786.1"/>
</dbReference>
<dbReference type="SMR" id="A1WLI2"/>
<dbReference type="STRING" id="391735.Veis_2748"/>
<dbReference type="GeneID" id="76461253"/>
<dbReference type="KEGG" id="vei:Veis_2748"/>
<dbReference type="eggNOG" id="COG0858">
    <property type="taxonomic scope" value="Bacteria"/>
</dbReference>
<dbReference type="HOGENOM" id="CLU_089475_5_1_4"/>
<dbReference type="OrthoDB" id="307788at2"/>
<dbReference type="Proteomes" id="UP000000374">
    <property type="component" value="Chromosome"/>
</dbReference>
<dbReference type="GO" id="GO:0005829">
    <property type="term" value="C:cytosol"/>
    <property type="evidence" value="ECO:0007669"/>
    <property type="project" value="TreeGrafter"/>
</dbReference>
<dbReference type="GO" id="GO:0043024">
    <property type="term" value="F:ribosomal small subunit binding"/>
    <property type="evidence" value="ECO:0007669"/>
    <property type="project" value="TreeGrafter"/>
</dbReference>
<dbReference type="GO" id="GO:0030490">
    <property type="term" value="P:maturation of SSU-rRNA"/>
    <property type="evidence" value="ECO:0007669"/>
    <property type="project" value="UniProtKB-UniRule"/>
</dbReference>
<dbReference type="Gene3D" id="3.30.300.20">
    <property type="match status" value="1"/>
</dbReference>
<dbReference type="HAMAP" id="MF_00003">
    <property type="entry name" value="RbfA"/>
    <property type="match status" value="1"/>
</dbReference>
<dbReference type="InterPro" id="IPR015946">
    <property type="entry name" value="KH_dom-like_a/b"/>
</dbReference>
<dbReference type="InterPro" id="IPR000238">
    <property type="entry name" value="RbfA"/>
</dbReference>
<dbReference type="InterPro" id="IPR023799">
    <property type="entry name" value="RbfA_dom_sf"/>
</dbReference>
<dbReference type="NCBIfam" id="TIGR00082">
    <property type="entry name" value="rbfA"/>
    <property type="match status" value="1"/>
</dbReference>
<dbReference type="PANTHER" id="PTHR33515">
    <property type="entry name" value="RIBOSOME-BINDING FACTOR A, CHLOROPLASTIC-RELATED"/>
    <property type="match status" value="1"/>
</dbReference>
<dbReference type="PANTHER" id="PTHR33515:SF1">
    <property type="entry name" value="RIBOSOME-BINDING FACTOR A, CHLOROPLASTIC-RELATED"/>
    <property type="match status" value="1"/>
</dbReference>
<dbReference type="Pfam" id="PF02033">
    <property type="entry name" value="RBFA"/>
    <property type="match status" value="1"/>
</dbReference>
<dbReference type="SUPFAM" id="SSF89919">
    <property type="entry name" value="Ribosome-binding factor A, RbfA"/>
    <property type="match status" value="1"/>
</dbReference>
<keyword id="KW-0963">Cytoplasm</keyword>
<keyword id="KW-1185">Reference proteome</keyword>
<keyword id="KW-0690">Ribosome biogenesis</keyword>
<organism>
    <name type="scientific">Verminephrobacter eiseniae (strain EF01-2)</name>
    <dbReference type="NCBI Taxonomy" id="391735"/>
    <lineage>
        <taxon>Bacteria</taxon>
        <taxon>Pseudomonadati</taxon>
        <taxon>Pseudomonadota</taxon>
        <taxon>Betaproteobacteria</taxon>
        <taxon>Burkholderiales</taxon>
        <taxon>Comamonadaceae</taxon>
        <taxon>Verminephrobacter</taxon>
    </lineage>
</organism>
<protein>
    <recommendedName>
        <fullName evidence="1">Ribosome-binding factor A</fullName>
    </recommendedName>
</protein>
<reference key="1">
    <citation type="submission" date="2006-12" db="EMBL/GenBank/DDBJ databases">
        <title>Complete sequence of chromosome 1 of Verminephrobacter eiseniae EF01-2.</title>
        <authorList>
            <person name="Copeland A."/>
            <person name="Lucas S."/>
            <person name="Lapidus A."/>
            <person name="Barry K."/>
            <person name="Detter J.C."/>
            <person name="Glavina del Rio T."/>
            <person name="Dalin E."/>
            <person name="Tice H."/>
            <person name="Pitluck S."/>
            <person name="Chertkov O."/>
            <person name="Brettin T."/>
            <person name="Bruce D."/>
            <person name="Han C."/>
            <person name="Tapia R."/>
            <person name="Gilna P."/>
            <person name="Schmutz J."/>
            <person name="Larimer F."/>
            <person name="Land M."/>
            <person name="Hauser L."/>
            <person name="Kyrpides N."/>
            <person name="Kim E."/>
            <person name="Stahl D."/>
            <person name="Richardson P."/>
        </authorList>
    </citation>
    <scope>NUCLEOTIDE SEQUENCE [LARGE SCALE GENOMIC DNA]</scope>
    <source>
        <strain>EF01-2</strain>
    </source>
</reference>
<name>RBFA_VEREI</name>
<evidence type="ECO:0000255" key="1">
    <source>
        <dbReference type="HAMAP-Rule" id="MF_00003"/>
    </source>
</evidence>